<sequence length="91" mass="10409">MKPNIHPDNYRTVLFFDSSANEGWLIRSCAGTHGKTMVWTDGKEYPLFSLDTSSSSHPVYTGKQRNVNTEGRASKFNQRFQSVMSSFRKDK</sequence>
<accession>B4RL59</accession>
<gene>
    <name evidence="1" type="primary">rpmE2</name>
    <name type="ordered locus">NGK_0869</name>
</gene>
<comment type="subunit">
    <text evidence="1">Part of the 50S ribosomal subunit.</text>
</comment>
<comment type="similarity">
    <text evidence="1">Belongs to the bacterial ribosomal protein bL31 family. Type B subfamily.</text>
</comment>
<proteinExistence type="inferred from homology"/>
<evidence type="ECO:0000255" key="1">
    <source>
        <dbReference type="HAMAP-Rule" id="MF_00502"/>
    </source>
</evidence>
<evidence type="ECO:0000305" key="2"/>
<keyword id="KW-0687">Ribonucleoprotein</keyword>
<keyword id="KW-0689">Ribosomal protein</keyword>
<reference key="1">
    <citation type="journal article" date="2008" name="J. Bacteriol.">
        <title>Complete genome sequence of Neisseria gonorrhoeae NCCP11945.</title>
        <authorList>
            <person name="Chung G.T."/>
            <person name="Yoo J.S."/>
            <person name="Oh H.B."/>
            <person name="Lee Y.S."/>
            <person name="Cha S.H."/>
            <person name="Kim S.J."/>
            <person name="Yoo C.K."/>
        </authorList>
    </citation>
    <scope>NUCLEOTIDE SEQUENCE [LARGE SCALE GENOMIC DNA]</scope>
    <source>
        <strain>NCCP11945</strain>
    </source>
</reference>
<feature type="chain" id="PRO_1000126824" description="Large ribosomal subunit protein bL31B">
    <location>
        <begin position="1"/>
        <end position="91"/>
    </location>
</feature>
<name>RL31B_NEIG2</name>
<organism>
    <name type="scientific">Neisseria gonorrhoeae (strain NCCP11945)</name>
    <dbReference type="NCBI Taxonomy" id="521006"/>
    <lineage>
        <taxon>Bacteria</taxon>
        <taxon>Pseudomonadati</taxon>
        <taxon>Pseudomonadota</taxon>
        <taxon>Betaproteobacteria</taxon>
        <taxon>Neisseriales</taxon>
        <taxon>Neisseriaceae</taxon>
        <taxon>Neisseria</taxon>
    </lineage>
</organism>
<dbReference type="EMBL" id="CP001050">
    <property type="protein sequence ID" value="ACF29549.1"/>
    <property type="molecule type" value="Genomic_DNA"/>
</dbReference>
<dbReference type="RefSeq" id="WP_003688378.1">
    <property type="nucleotide sequence ID" value="NC_011035.1"/>
</dbReference>
<dbReference type="SMR" id="B4RL59"/>
<dbReference type="KEGG" id="ngk:NGK_0869"/>
<dbReference type="HOGENOM" id="CLU_114306_2_1_4"/>
<dbReference type="Proteomes" id="UP000002564">
    <property type="component" value="Chromosome"/>
</dbReference>
<dbReference type="GO" id="GO:1990904">
    <property type="term" value="C:ribonucleoprotein complex"/>
    <property type="evidence" value="ECO:0007669"/>
    <property type="project" value="UniProtKB-KW"/>
</dbReference>
<dbReference type="GO" id="GO:0005840">
    <property type="term" value="C:ribosome"/>
    <property type="evidence" value="ECO:0007669"/>
    <property type="project" value="UniProtKB-KW"/>
</dbReference>
<dbReference type="GO" id="GO:0003735">
    <property type="term" value="F:structural constituent of ribosome"/>
    <property type="evidence" value="ECO:0007669"/>
    <property type="project" value="InterPro"/>
</dbReference>
<dbReference type="GO" id="GO:0006412">
    <property type="term" value="P:translation"/>
    <property type="evidence" value="ECO:0007669"/>
    <property type="project" value="UniProtKB-UniRule"/>
</dbReference>
<dbReference type="Gene3D" id="4.10.830.30">
    <property type="entry name" value="Ribosomal protein L31"/>
    <property type="match status" value="1"/>
</dbReference>
<dbReference type="HAMAP" id="MF_00502">
    <property type="entry name" value="Ribosomal_bL31_2"/>
    <property type="match status" value="1"/>
</dbReference>
<dbReference type="InterPro" id="IPR034704">
    <property type="entry name" value="Ribosomal_bL28/bL31-like_sf"/>
</dbReference>
<dbReference type="InterPro" id="IPR002150">
    <property type="entry name" value="Ribosomal_bL31"/>
</dbReference>
<dbReference type="InterPro" id="IPR027493">
    <property type="entry name" value="Ribosomal_bL31_B"/>
</dbReference>
<dbReference type="InterPro" id="IPR042105">
    <property type="entry name" value="Ribosomal_bL31_sf"/>
</dbReference>
<dbReference type="NCBIfam" id="TIGR00105">
    <property type="entry name" value="L31"/>
    <property type="match status" value="1"/>
</dbReference>
<dbReference type="NCBIfam" id="NF002462">
    <property type="entry name" value="PRK01678.1"/>
    <property type="match status" value="1"/>
</dbReference>
<dbReference type="PANTHER" id="PTHR33280">
    <property type="entry name" value="50S RIBOSOMAL PROTEIN L31, CHLOROPLASTIC"/>
    <property type="match status" value="1"/>
</dbReference>
<dbReference type="PANTHER" id="PTHR33280:SF1">
    <property type="entry name" value="LARGE RIBOSOMAL SUBUNIT PROTEIN BL31C"/>
    <property type="match status" value="1"/>
</dbReference>
<dbReference type="Pfam" id="PF01197">
    <property type="entry name" value="Ribosomal_L31"/>
    <property type="match status" value="1"/>
</dbReference>
<dbReference type="PRINTS" id="PR01249">
    <property type="entry name" value="RIBOSOMALL31"/>
</dbReference>
<dbReference type="SUPFAM" id="SSF143800">
    <property type="entry name" value="L28p-like"/>
    <property type="match status" value="1"/>
</dbReference>
<dbReference type="PROSITE" id="PS01143">
    <property type="entry name" value="RIBOSOMAL_L31"/>
    <property type="match status" value="1"/>
</dbReference>
<protein>
    <recommendedName>
        <fullName evidence="1">Large ribosomal subunit protein bL31B</fullName>
    </recommendedName>
    <alternativeName>
        <fullName evidence="2">50S ribosomal protein L31 type B</fullName>
    </alternativeName>
</protein>